<evidence type="ECO:0000250" key="1">
    <source>
        <dbReference type="UniProtKB" id="P03523"/>
    </source>
</evidence>
<evidence type="ECO:0000250" key="2">
    <source>
        <dbReference type="UniProtKB" id="P28887"/>
    </source>
</evidence>
<evidence type="ECO:0000255" key="3">
    <source>
        <dbReference type="PROSITE-ProRule" id="PRU00539"/>
    </source>
</evidence>
<evidence type="ECO:0000255" key="4">
    <source>
        <dbReference type="PROSITE-ProRule" id="PRU00923"/>
    </source>
</evidence>
<evidence type="ECO:0000256" key="5">
    <source>
        <dbReference type="SAM" id="MobiDB-lite"/>
    </source>
</evidence>
<evidence type="ECO:0000305" key="6"/>
<comment type="function">
    <text evidence="1">RNA-directed RNA polymerase that catalyzes the transcription of viral mRNAs, their capping and polyadenylation. The template is composed of the viral RNA tightly encapsidated by the nucleoprotein (N). The viral polymerase binds to the genomic RNA at the 3' leader promoter, and transcribes subsequently all viral mRNAs with a decreasing efficiency. The first gene is the most transcribed, and the last the least transcribed. The viral phosphoprotein acts as a processivity factor. Capping is concomitant with initiation of mRNA transcription. Indeed, a GDP polyribonucleotidyl transferase (PRNTase) adds the cap structure when the nascent RNA chain length has reached few nucleotides. Ribose 2'-O methylation of viral mRNA cap precedes and facilitates subsequent guanine-N-7 methylation, both activities being carried by the viral polymerase. Polyadenylation of mRNAs occur by a stuttering mechanism at a slipery stop site present at the end viral genes. After finishing transcription of a mRNA, the polymerase can resume transcription of the downstream gene.</text>
</comment>
<comment type="function">
    <text evidence="1">RNA-directed RNA polymerase that catalyzes the replication of viral genomic RNA. The template is composed of the viral RNA tightly encapsidated by the nucleoprotein (N). The replicase mode is dependent on intracellular N protein concentration. In this mode, the polymerase replicates the whole viral genome without recognizing transcriptional signals, and the replicated genome is not caped or polyadenylated.</text>
</comment>
<comment type="catalytic activity">
    <reaction evidence="3">
        <text>RNA(n) + a ribonucleoside 5'-triphosphate = RNA(n+1) + diphosphate</text>
        <dbReference type="Rhea" id="RHEA:21248"/>
        <dbReference type="Rhea" id="RHEA-COMP:14527"/>
        <dbReference type="Rhea" id="RHEA-COMP:17342"/>
        <dbReference type="ChEBI" id="CHEBI:33019"/>
        <dbReference type="ChEBI" id="CHEBI:61557"/>
        <dbReference type="ChEBI" id="CHEBI:140395"/>
        <dbReference type="EC" id="2.7.7.48"/>
    </reaction>
</comment>
<comment type="catalytic activity">
    <reaction evidence="1">
        <text>a 5'-end (5'-triphosphoguanosine)-adenylyl-adenylyl-cytidylyl-adenosine in mRNA + 2 S-adenosyl-L-methionine = a 5'-end (N(7)-methyl 5'-triphosphoguanosine)-(2'-O-methyladenylyl)-adenylyl-cytidylyl-adenosine in mRNA + 2 S-adenosyl-L-homocysteine + H(+)</text>
        <dbReference type="Rhea" id="RHEA:65376"/>
        <dbReference type="Rhea" id="RHEA-COMP:16797"/>
        <dbReference type="Rhea" id="RHEA-COMP:16798"/>
        <dbReference type="ChEBI" id="CHEBI:15378"/>
        <dbReference type="ChEBI" id="CHEBI:57856"/>
        <dbReference type="ChEBI" id="CHEBI:59789"/>
        <dbReference type="ChEBI" id="CHEBI:156483"/>
        <dbReference type="ChEBI" id="CHEBI:156484"/>
        <dbReference type="EC" id="2.1.1.375"/>
    </reaction>
</comment>
<comment type="catalytic activity">
    <reaction evidence="1">
        <text>a 5'-end (5'-triphosphoguanosine)-adenylyl-adenylyl-cytidylyl-adenosine in mRNA + S-adenosyl-L-methionine = a 5'-end (5'-triphosphoguanosine)-(2'-O-methyladenylyl)-adenylyl-cytidylyl-adenosine in mRNA + S-adenosyl-L-homocysteine + H(+)</text>
        <dbReference type="Rhea" id="RHEA:65380"/>
        <dbReference type="Rhea" id="RHEA-COMP:16797"/>
        <dbReference type="Rhea" id="RHEA-COMP:16801"/>
        <dbReference type="ChEBI" id="CHEBI:15378"/>
        <dbReference type="ChEBI" id="CHEBI:57856"/>
        <dbReference type="ChEBI" id="CHEBI:59789"/>
        <dbReference type="ChEBI" id="CHEBI:156482"/>
        <dbReference type="ChEBI" id="CHEBI:156484"/>
    </reaction>
</comment>
<comment type="catalytic activity">
    <reaction evidence="2">
        <text>a 5'-end triphospho-adenylyl-adenylyl-cytidylyl-adenosine in mRNA + GDP + H(+) = a 5'-end (5'-triphosphoguanosine)-adenylyl-adenylyl-cytidylyl-adenosine in mRNA + diphosphate</text>
        <dbReference type="Rhea" id="RHEA:65436"/>
        <dbReference type="Rhea" id="RHEA-COMP:16797"/>
        <dbReference type="Rhea" id="RHEA-COMP:16799"/>
        <dbReference type="ChEBI" id="CHEBI:15378"/>
        <dbReference type="ChEBI" id="CHEBI:33019"/>
        <dbReference type="ChEBI" id="CHEBI:58189"/>
        <dbReference type="ChEBI" id="CHEBI:156484"/>
        <dbReference type="ChEBI" id="CHEBI:156503"/>
        <dbReference type="EC" id="2.7.7.88"/>
    </reaction>
</comment>
<comment type="catalytic activity">
    <reaction evidence="1">
        <text>a 5'-end (5'-triphosphoguanosine)-(2'-O-methyladenylyl)-adenylyl-cytidylyl-adenosine in mRNA + S-adenosyl-L-methionine = a 5'-end (N(7)-methyl 5'-triphosphoguanosine)-(2'-O-methyladenylyl)-adenylyl-cytidylyl-adenosine in mRNA + S-adenosyl-L-homocysteine</text>
        <dbReference type="Rhea" id="RHEA:65440"/>
        <dbReference type="Rhea" id="RHEA-COMP:16798"/>
        <dbReference type="Rhea" id="RHEA-COMP:16801"/>
        <dbReference type="ChEBI" id="CHEBI:57856"/>
        <dbReference type="ChEBI" id="CHEBI:59789"/>
        <dbReference type="ChEBI" id="CHEBI:156482"/>
        <dbReference type="ChEBI" id="CHEBI:156483"/>
    </reaction>
</comment>
<comment type="catalytic activity">
    <reaction evidence="2">
        <text>GTP + H2O = GDP + phosphate + H(+)</text>
        <dbReference type="Rhea" id="RHEA:19669"/>
        <dbReference type="ChEBI" id="CHEBI:15377"/>
        <dbReference type="ChEBI" id="CHEBI:15378"/>
        <dbReference type="ChEBI" id="CHEBI:37565"/>
        <dbReference type="ChEBI" id="CHEBI:43474"/>
        <dbReference type="ChEBI" id="CHEBI:58189"/>
    </reaction>
</comment>
<comment type="subunit">
    <text evidence="1">May form homodimer. Interacts with the P protein.</text>
</comment>
<comment type="subcellular location">
    <subcellularLocation>
        <location evidence="1">Virion</location>
    </subcellularLocation>
    <subcellularLocation>
        <location evidence="1">Host cytoplasm</location>
    </subcellularLocation>
    <text evidence="1">L and P are packaged asymmetrically towards the blunt end of the virus.</text>
</comment>
<comment type="similarity">
    <text evidence="6">Belongs to the rhabdoviridae protein L family.</text>
</comment>
<protein>
    <recommendedName>
        <fullName>RNA-directed RNA polymerase L</fullName>
        <shortName>Protein L</shortName>
    </recommendedName>
    <alternativeName>
        <fullName>Large structural protein</fullName>
    </alternativeName>
    <alternativeName>
        <fullName>Replicase</fullName>
    </alternativeName>
    <alternativeName>
        <fullName>Transcriptase</fullName>
    </alternativeName>
    <domain>
        <recommendedName>
            <fullName>RNA-directed RNA polymerase</fullName>
            <ecNumber evidence="2">2.7.7.48</ecNumber>
        </recommendedName>
    </domain>
    <domain>
        <recommendedName>
            <fullName evidence="1">GTP phosphohydrolase</fullName>
            <ecNumber evidence="1">3.6.1.-</ecNumber>
        </recommendedName>
    </domain>
    <domain>
        <recommendedName>
            <fullName evidence="6">GDP polyribonucleotidyltransferase</fullName>
            <ecNumber evidence="1">2.7.7.88</ecNumber>
        </recommendedName>
        <alternativeName>
            <fullName evidence="6">PRNTase</fullName>
        </alternativeName>
    </domain>
    <domain>
        <recommendedName>
            <fullName evidence="6">mRNA cap methyltransferase</fullName>
            <ecNumber evidence="1">2.1.1.375</ecNumber>
        </recommendedName>
        <alternativeName>
            <fullName evidence="1">mRNA (guanine-N(7)-)-methyltransferase</fullName>
            <shortName evidence="1">G-N7-MTase</shortName>
        </alternativeName>
        <alternativeName>
            <fullName evidence="1">mRNA (nucleoside-2'-O-)-methyltransferase</fullName>
            <shortName evidence="1">N1-2'-O-MTase</shortName>
        </alternativeName>
    </domain>
</protein>
<gene>
    <name type="primary">L</name>
</gene>
<feature type="chain" id="PRO_0000297833" description="RNA-directed RNA polymerase L">
    <location>
        <begin position="1"/>
        <end position="2144"/>
    </location>
</feature>
<feature type="domain" description="RdRp catalytic" evidence="3">
    <location>
        <begin position="624"/>
        <end position="810"/>
    </location>
</feature>
<feature type="domain" description="Mononegavirus-type SAM-dependent 2'-O-MTase" evidence="4">
    <location>
        <begin position="1687"/>
        <end position="1884"/>
    </location>
</feature>
<feature type="region of interest" description="Disordered" evidence="5">
    <location>
        <begin position="1"/>
        <end position="20"/>
    </location>
</feature>
<feature type="compositionally biased region" description="Acidic residues" evidence="5">
    <location>
        <begin position="1"/>
        <end position="11"/>
    </location>
</feature>
<keyword id="KW-0067">ATP-binding</keyword>
<keyword id="KW-1035">Host cytoplasm</keyword>
<keyword id="KW-0378">Hydrolase</keyword>
<keyword id="KW-0489">Methyltransferase</keyword>
<keyword id="KW-0506">mRNA capping</keyword>
<keyword id="KW-0507">mRNA processing</keyword>
<keyword id="KW-0511">Multifunctional enzyme</keyword>
<keyword id="KW-0547">Nucleotide-binding</keyword>
<keyword id="KW-0548">Nucleotidyltransferase</keyword>
<keyword id="KW-1185">Reference proteome</keyword>
<keyword id="KW-0696">RNA-directed RNA polymerase</keyword>
<keyword id="KW-0949">S-adenosyl-L-methionine</keyword>
<keyword id="KW-0808">Transferase</keyword>
<keyword id="KW-0693">Viral RNA replication</keyword>
<keyword id="KW-0946">Virion</keyword>
<organismHost>
    <name type="scientific">Bos taurus</name>
    <name type="common">Bovine</name>
    <dbReference type="NCBI Taxonomy" id="9913"/>
</organismHost>
<organismHost>
    <name type="scientific">Bubalus bubalis</name>
    <name type="common">Domestic water buffalo</name>
    <dbReference type="NCBI Taxonomy" id="89462"/>
</organismHost>
<organismHost>
    <name type="scientific">Culicoides</name>
    <dbReference type="NCBI Taxonomy" id="58271"/>
</organismHost>
<organismHost>
    <name type="scientific">Syncerus caffer</name>
    <name type="common">African buffalo</name>
    <dbReference type="NCBI Taxonomy" id="9970"/>
</organismHost>
<proteinExistence type="inferred from homology"/>
<sequence>MDSVDFLDSEDHDQNSWNGEEFGDDFLEYIWDQDEEESMDLINNKDYNLNSPLIIDPLVELRNWINNEKGHSESDLRSQQSFEFKEFDIIKRVLRNFINNVNLRRPEDSHHIFAKFLNQAIVTNDYWNLGETLSKIVEDIREVGASFYRGLDLDENIIIDNIRRNWNDVPQLGKSWFLKFFELHRVICVMNARSNIELKNLQSKNKLKKIKLPKELEERGHKCWIFDLDISGRWIIFDNYAYWELQRIVLNREFILMMKDVLISRFQTVLSMNVCTDEYKYTEENIETMMSLYREGDLILEEHGNKSYKGLKLLESICNLRLIKIVRKSRPKIPEFPNFENHIYSSLNDLRVERGIDLSKFSNIILREESIDMVLAFYSSFRHFGHPWIDYLTGLDKLESQVNKDCQVDIQYANLLASDLAFKILRKNFLEKKCWSVDKNKMDKKHKLYHHISHNTWPTQQIIDEFGDHWHELPIIQCYEIPDMIDISQIYSDKSHSLDRSEVLKIIKEQKHKRIPTKRVLQTLLEKPATNWPEFLKAVNDYGLDWEKLVIGLKAKERELKEEGRFFSLMSYELRDYFVSTEYLIKKYFVPLFEGLTMADDLNTVIKKMLDVSSGQGTREYEYITIANNIDYEKWNNYQRIESNGPVFTVMGRFLGLPNLFTRTHEFFQKSLIYYNQRPDLMMVRGRECLNRLGVKVCWEGQKGGLEGLRQKGWSILNYLMIERESRVRNTRVKILAQGDNQTISMCYKTESWQNEEELDNHIKNMVSNNNQIMQAIINGTEKLGLRINLDETMTSADYINYGKVPIIEGTIKGLPTKRWSRVNFTSNDQLPSTSTVINSSSTNALTVGHFSERPHDAINGHLLFGSLGLLLLDYHNPAIRGQISEFIPEANINNKLYNILLLYLDPSLGGIAGTSLTRFFIRGFPDGVTESLTFWKIVGEYTNDQDIKRLASTVGSPELSPFKPEDLDKLIEKPESLNIKHGLSSSNMIKGEVKKNIIENCSKIQNEIIRDAARNLVSEENQLFLWLRTINPLFPRFLSQFAESTYYGVTKSLINLFTNSKTIRGIYKKKYRKELDQLMIKGEVRSIFGLIKIVNRSKQFVMPIWDCSASLADSLRKRSWGKEVLGTTVPHPAEMFKGYRGGEDSCSFCRGNGSNNNYLTVLMPRGIPMKCHYRGPYYPYLGSNTKESTSILQPWEKETKVPVLKRACDLRKSINWFVTPDSLLAKSIFNNLKALTGEDWEDQIKGYKRTGSSLHRFGCSRVSSGGFSASSPSCFTWCIATTDTMCGLGEVNYDFMFQSTLVWCQMSSIIRERGNLHSKIHHYHIKCNKCLREIQEPVLESGWEYQPRNVSQILEKWRPKNMKTWGEEKIHMDIKDNDDEWDNLTVEDKSYEIGKTIGWLVGDSLLSHKRNYEFKSLFPVSIRYKLEGLPFLEGILDGFKICGSLNLTHRRNYMILKKPKLALQGTVFFLIDRSSFISEFTNFISHPKIYKAIKSLPHKIPTSYPMNLSDLGSILRSFLKQLYYRRKELIIKKSSWVFSDMRTNEVICSFGLSHLTYRILIQEGLNKDMKLRLQQCQDLYINIMTESKEELDKSSAKREIVECLRELKFVSSEIRHAVKFRYITGEKGEVQLIKEMEERRTWGDEYTGKANLLDVWYLTSQSSENKNLVKGIKIPYHSNPTISGLRINQIATGAHYKLRTLINMTRITYRDFICGGDGSGGMTSCLLRLKPLSRGVFNSLLILDDKPLHGTRPSPPTAIMELGEDSLRCVNCYDVWKEPSDLSKQETWKYFVKLKKQNSMMIDLIVLDMEIINDEVIEDIYQNTKNHLIYLLEEGGCLIIKTYLTYLLKENTNILDMLGHLFTSVQLINTNLSSMKTSEIYVLFKNYKNRLTPCLQFDRNIILDNWSFFYINKPIREEFERARELLNEDLGMGMPKELEPNPLIELSQMLQNSGVDGVAMSAISQEENLSFFSTKELAVICLIIISESHLVTTKKHKNDCNCLQKKPYSDQEIKSWMSGIIGIGLYLSLLDNKTNSFEILDYLINSDFKSIHVNFNKERELCWSINYSSNEKKGKDLWKKRFSVKDKMAFMGNWIRLLHRQKVKNQKCEYKEGRINNFLKFINKGLNLQKVKSQYEEEIAKLL</sequence>
<name>L_BEFVB</name>
<organism>
    <name type="scientific">Bovine ephemeral fever virus (strain BB7721)</name>
    <name type="common">BEFV</name>
    <dbReference type="NCBI Taxonomy" id="928297"/>
    <lineage>
        <taxon>Viruses</taxon>
        <taxon>Riboviria</taxon>
        <taxon>Orthornavirae</taxon>
        <taxon>Negarnaviricota</taxon>
        <taxon>Haploviricotina</taxon>
        <taxon>Monjiviricetes</taxon>
        <taxon>Mononegavirales</taxon>
        <taxon>Rhabdoviridae</taxon>
        <taxon>Alpharhabdovirinae</taxon>
        <taxon>Ephemerovirus</taxon>
        <taxon>Ephemerovirus febris</taxon>
    </lineage>
</organism>
<accession>Q9E784</accession>
<reference key="1">
    <citation type="journal article" date="2000" name="Virus Res.">
        <title>RNA polymerase (L) gene and genome terminal sequences of ephemeroviruses bovine ephemeral fever virus and Adelaide River virus indicate a close relationship to vesiculoviruses.</title>
        <authorList>
            <person name="Dhillon J."/>
            <person name="Cowley J.A."/>
            <person name="Wang Y."/>
            <person name="Walker P.J."/>
        </authorList>
    </citation>
    <scope>NUCLEOTIDE SEQUENCE [GENOMIC RNA]</scope>
</reference>
<dbReference type="EC" id="2.7.7.48" evidence="2"/>
<dbReference type="EC" id="3.6.1.-" evidence="1"/>
<dbReference type="EC" id="2.7.7.88" evidence="1"/>
<dbReference type="EC" id="2.1.1.375" evidence="1"/>
<dbReference type="EMBL" id="AF234533">
    <property type="protein sequence ID" value="AAG10420.1"/>
    <property type="molecule type" value="Genomic_DNA"/>
</dbReference>
<dbReference type="RefSeq" id="NP_065409.1">
    <property type="nucleotide sequence ID" value="NC_002526.1"/>
</dbReference>
<dbReference type="SMR" id="Q9E784"/>
<dbReference type="GeneID" id="911734"/>
<dbReference type="KEGG" id="vg:911734"/>
<dbReference type="Proteomes" id="UP000008588">
    <property type="component" value="Segment"/>
</dbReference>
<dbReference type="GO" id="GO:0030430">
    <property type="term" value="C:host cell cytoplasm"/>
    <property type="evidence" value="ECO:0007669"/>
    <property type="project" value="UniProtKB-SubCell"/>
</dbReference>
<dbReference type="GO" id="GO:0044423">
    <property type="term" value="C:virion component"/>
    <property type="evidence" value="ECO:0007669"/>
    <property type="project" value="UniProtKB-KW"/>
</dbReference>
<dbReference type="GO" id="GO:0005524">
    <property type="term" value="F:ATP binding"/>
    <property type="evidence" value="ECO:0007669"/>
    <property type="project" value="UniProtKB-KW"/>
</dbReference>
<dbReference type="GO" id="GO:0003924">
    <property type="term" value="F:GTPase activity"/>
    <property type="evidence" value="ECO:0007669"/>
    <property type="project" value="RHEA"/>
</dbReference>
<dbReference type="GO" id="GO:0004482">
    <property type="term" value="F:mRNA 5'-cap (guanine-N7-)-methyltransferase activity"/>
    <property type="evidence" value="ECO:0007669"/>
    <property type="project" value="InterPro"/>
</dbReference>
<dbReference type="GO" id="GO:0003968">
    <property type="term" value="F:RNA-directed RNA polymerase activity"/>
    <property type="evidence" value="ECO:0007669"/>
    <property type="project" value="UniProtKB-KW"/>
</dbReference>
<dbReference type="InterPro" id="IPR039530">
    <property type="entry name" value="L_methyltransferase_rhabdo"/>
</dbReference>
<dbReference type="InterPro" id="IPR039736">
    <property type="entry name" value="L_poly_C"/>
</dbReference>
<dbReference type="InterPro" id="IPR048398">
    <property type="entry name" value="Methyltrans_Mon_C"/>
</dbReference>
<dbReference type="InterPro" id="IPR048397">
    <property type="entry name" value="Methyltrans_Mon_CD"/>
</dbReference>
<dbReference type="InterPro" id="IPR026890">
    <property type="entry name" value="Mononeg_mRNAcap"/>
</dbReference>
<dbReference type="InterPro" id="IPR014023">
    <property type="entry name" value="Mononeg_RNA_pol_cat"/>
</dbReference>
<dbReference type="InterPro" id="IPR025786">
    <property type="entry name" value="Mononega_L_MeTrfase"/>
</dbReference>
<dbReference type="InterPro" id="IPR017234">
    <property type="entry name" value="RNA-dir_pol_rhabdovirus"/>
</dbReference>
<dbReference type="NCBIfam" id="TIGR04198">
    <property type="entry name" value="paramyx_RNAcap"/>
    <property type="match status" value="1"/>
</dbReference>
<dbReference type="Pfam" id="PF21080">
    <property type="entry name" value="Methyltrans_Mon_1st"/>
    <property type="match status" value="1"/>
</dbReference>
<dbReference type="Pfam" id="PF14314">
    <property type="entry name" value="Methyltrans_Mon_2nd"/>
    <property type="match status" value="1"/>
</dbReference>
<dbReference type="Pfam" id="PF21081">
    <property type="entry name" value="Methyltrans_Mon_3rd"/>
    <property type="match status" value="1"/>
</dbReference>
<dbReference type="Pfam" id="PF14318">
    <property type="entry name" value="Mononeg_mRNAcap"/>
    <property type="match status" value="1"/>
</dbReference>
<dbReference type="Pfam" id="PF00946">
    <property type="entry name" value="Mononeg_RNA_pol"/>
    <property type="match status" value="1"/>
</dbReference>
<dbReference type="PIRSF" id="PIRSF037546">
    <property type="entry name" value="RNA_pol_RhabdoV_sub"/>
    <property type="match status" value="1"/>
</dbReference>
<dbReference type="PROSITE" id="PS50526">
    <property type="entry name" value="RDRP_SSRNA_NEG_NONSEG"/>
    <property type="match status" value="1"/>
</dbReference>
<dbReference type="PROSITE" id="PS51590">
    <property type="entry name" value="SAM_MT_MNV_L"/>
    <property type="match status" value="1"/>
</dbReference>